<dbReference type="EMBL" id="CP000554">
    <property type="protein sequence ID" value="ABM79044.1"/>
    <property type="molecule type" value="Genomic_DNA"/>
</dbReference>
<dbReference type="RefSeq" id="WP_011826910.1">
    <property type="nucleotide sequence ID" value="NC_008820.1"/>
</dbReference>
<dbReference type="SMR" id="A2CC34"/>
<dbReference type="STRING" id="59922.P9303_23091"/>
<dbReference type="KEGG" id="pmf:P9303_23091"/>
<dbReference type="HOGENOM" id="CLU_078858_2_1_3"/>
<dbReference type="BioCyc" id="PMAR59922:G1G80-2026-MONOMER"/>
<dbReference type="Proteomes" id="UP000002274">
    <property type="component" value="Chromosome"/>
</dbReference>
<dbReference type="GO" id="GO:1990904">
    <property type="term" value="C:ribonucleoprotein complex"/>
    <property type="evidence" value="ECO:0007669"/>
    <property type="project" value="UniProtKB-KW"/>
</dbReference>
<dbReference type="GO" id="GO:0005840">
    <property type="term" value="C:ribosome"/>
    <property type="evidence" value="ECO:0007669"/>
    <property type="project" value="UniProtKB-KW"/>
</dbReference>
<dbReference type="GO" id="GO:0019843">
    <property type="term" value="F:rRNA binding"/>
    <property type="evidence" value="ECO:0007669"/>
    <property type="project" value="UniProtKB-UniRule"/>
</dbReference>
<dbReference type="GO" id="GO:0003735">
    <property type="term" value="F:structural constituent of ribosome"/>
    <property type="evidence" value="ECO:0007669"/>
    <property type="project" value="InterPro"/>
</dbReference>
<dbReference type="GO" id="GO:0000049">
    <property type="term" value="F:tRNA binding"/>
    <property type="evidence" value="ECO:0007669"/>
    <property type="project" value="UniProtKB-KW"/>
</dbReference>
<dbReference type="GO" id="GO:0006412">
    <property type="term" value="P:translation"/>
    <property type="evidence" value="ECO:0007669"/>
    <property type="project" value="UniProtKB-UniRule"/>
</dbReference>
<dbReference type="CDD" id="cd01433">
    <property type="entry name" value="Ribosomal_L16_L10e"/>
    <property type="match status" value="1"/>
</dbReference>
<dbReference type="FunFam" id="3.90.1170.10:FF:000001">
    <property type="entry name" value="50S ribosomal protein L16"/>
    <property type="match status" value="1"/>
</dbReference>
<dbReference type="Gene3D" id="3.90.1170.10">
    <property type="entry name" value="Ribosomal protein L10e/L16"/>
    <property type="match status" value="1"/>
</dbReference>
<dbReference type="HAMAP" id="MF_01342">
    <property type="entry name" value="Ribosomal_uL16"/>
    <property type="match status" value="1"/>
</dbReference>
<dbReference type="InterPro" id="IPR047873">
    <property type="entry name" value="Ribosomal_uL16"/>
</dbReference>
<dbReference type="InterPro" id="IPR000114">
    <property type="entry name" value="Ribosomal_uL16_bact-type"/>
</dbReference>
<dbReference type="InterPro" id="IPR020798">
    <property type="entry name" value="Ribosomal_uL16_CS"/>
</dbReference>
<dbReference type="InterPro" id="IPR016180">
    <property type="entry name" value="Ribosomal_uL16_dom"/>
</dbReference>
<dbReference type="InterPro" id="IPR036920">
    <property type="entry name" value="Ribosomal_uL16_sf"/>
</dbReference>
<dbReference type="NCBIfam" id="TIGR01164">
    <property type="entry name" value="rplP_bact"/>
    <property type="match status" value="1"/>
</dbReference>
<dbReference type="PANTHER" id="PTHR12220">
    <property type="entry name" value="50S/60S RIBOSOMAL PROTEIN L16"/>
    <property type="match status" value="1"/>
</dbReference>
<dbReference type="PANTHER" id="PTHR12220:SF13">
    <property type="entry name" value="LARGE RIBOSOMAL SUBUNIT PROTEIN UL16M"/>
    <property type="match status" value="1"/>
</dbReference>
<dbReference type="Pfam" id="PF00252">
    <property type="entry name" value="Ribosomal_L16"/>
    <property type="match status" value="1"/>
</dbReference>
<dbReference type="PRINTS" id="PR00060">
    <property type="entry name" value="RIBOSOMALL16"/>
</dbReference>
<dbReference type="SUPFAM" id="SSF54686">
    <property type="entry name" value="Ribosomal protein L16p/L10e"/>
    <property type="match status" value="1"/>
</dbReference>
<dbReference type="PROSITE" id="PS00586">
    <property type="entry name" value="RIBOSOMAL_L16_1"/>
    <property type="match status" value="1"/>
</dbReference>
<dbReference type="PROSITE" id="PS00701">
    <property type="entry name" value="RIBOSOMAL_L16_2"/>
    <property type="match status" value="1"/>
</dbReference>
<organism>
    <name type="scientific">Prochlorococcus marinus (strain MIT 9303)</name>
    <dbReference type="NCBI Taxonomy" id="59922"/>
    <lineage>
        <taxon>Bacteria</taxon>
        <taxon>Bacillati</taxon>
        <taxon>Cyanobacteriota</taxon>
        <taxon>Cyanophyceae</taxon>
        <taxon>Synechococcales</taxon>
        <taxon>Prochlorococcaceae</taxon>
        <taxon>Prochlorococcus</taxon>
    </lineage>
</organism>
<feature type="chain" id="PRO_1000054676" description="Large ribosomal subunit protein uL16">
    <location>
        <begin position="1"/>
        <end position="158"/>
    </location>
</feature>
<name>RL16_PROM3</name>
<reference key="1">
    <citation type="journal article" date="2007" name="PLoS Genet.">
        <title>Patterns and implications of gene gain and loss in the evolution of Prochlorococcus.</title>
        <authorList>
            <person name="Kettler G.C."/>
            <person name="Martiny A.C."/>
            <person name="Huang K."/>
            <person name="Zucker J."/>
            <person name="Coleman M.L."/>
            <person name="Rodrigue S."/>
            <person name="Chen F."/>
            <person name="Lapidus A."/>
            <person name="Ferriera S."/>
            <person name="Johnson J."/>
            <person name="Steglich C."/>
            <person name="Church G.M."/>
            <person name="Richardson P."/>
            <person name="Chisholm S.W."/>
        </authorList>
    </citation>
    <scope>NUCLEOTIDE SEQUENCE [LARGE SCALE GENOMIC DNA]</scope>
    <source>
        <strain>MIT 9303</strain>
    </source>
</reference>
<protein>
    <recommendedName>
        <fullName evidence="1">Large ribosomal subunit protein uL16</fullName>
    </recommendedName>
    <alternativeName>
        <fullName evidence="2">50S ribosomal protein L16</fullName>
    </alternativeName>
</protein>
<proteinExistence type="inferred from homology"/>
<keyword id="KW-0687">Ribonucleoprotein</keyword>
<keyword id="KW-0689">Ribosomal protein</keyword>
<keyword id="KW-0694">RNA-binding</keyword>
<keyword id="KW-0699">rRNA-binding</keyword>
<keyword id="KW-0820">tRNA-binding</keyword>
<gene>
    <name evidence="1" type="primary">rplP</name>
    <name evidence="1" type="synonym">rpl16</name>
    <name type="ordered locus">P9303_23091</name>
</gene>
<sequence>MLSPKRVKFRKQQRGRMRGVATRGNTIAFGEFALQAQECGWITSRQIEASRRAMTRYVKRGGKIWIRIFPDKPVTMRPAETRMGSGKGNPEFWVAVIKPGRILFEMGGEEITEEIAREAMRLAQYKLPIKTKFIGLDDQEKVAGSDKPASVPAITAES</sequence>
<comment type="function">
    <text evidence="1">Binds 23S rRNA and is also seen to make contacts with the A and possibly P site tRNAs.</text>
</comment>
<comment type="subunit">
    <text evidence="1">Part of the 50S ribosomal subunit.</text>
</comment>
<comment type="similarity">
    <text evidence="1">Belongs to the universal ribosomal protein uL16 family.</text>
</comment>
<accession>A2CC34</accession>
<evidence type="ECO:0000255" key="1">
    <source>
        <dbReference type="HAMAP-Rule" id="MF_01342"/>
    </source>
</evidence>
<evidence type="ECO:0000305" key="2"/>